<feature type="chain" id="PRO_0000322811" description="Holliday junction branch migration complex subunit RuvB">
    <location>
        <begin position="1"/>
        <end position="351"/>
    </location>
</feature>
<feature type="region of interest" description="Large ATPase domain (RuvB-L)" evidence="1">
    <location>
        <begin position="4"/>
        <end position="199"/>
    </location>
</feature>
<feature type="region of interest" description="Small ATPAse domain (RuvB-S)" evidence="1">
    <location>
        <begin position="200"/>
        <end position="270"/>
    </location>
</feature>
<feature type="region of interest" description="Head domain (RuvB-H)" evidence="1">
    <location>
        <begin position="273"/>
        <end position="351"/>
    </location>
</feature>
<feature type="binding site" evidence="1">
    <location>
        <position position="38"/>
    </location>
    <ligand>
        <name>ATP</name>
        <dbReference type="ChEBI" id="CHEBI:30616"/>
    </ligand>
</feature>
<feature type="binding site" evidence="1">
    <location>
        <position position="39"/>
    </location>
    <ligand>
        <name>ATP</name>
        <dbReference type="ChEBI" id="CHEBI:30616"/>
    </ligand>
</feature>
<feature type="binding site" evidence="1">
    <location>
        <position position="80"/>
    </location>
    <ligand>
        <name>ATP</name>
        <dbReference type="ChEBI" id="CHEBI:30616"/>
    </ligand>
</feature>
<feature type="binding site" evidence="1">
    <location>
        <position position="83"/>
    </location>
    <ligand>
        <name>ATP</name>
        <dbReference type="ChEBI" id="CHEBI:30616"/>
    </ligand>
</feature>
<feature type="binding site" evidence="1">
    <location>
        <position position="84"/>
    </location>
    <ligand>
        <name>ATP</name>
        <dbReference type="ChEBI" id="CHEBI:30616"/>
    </ligand>
</feature>
<feature type="binding site" evidence="1">
    <location>
        <position position="84"/>
    </location>
    <ligand>
        <name>Mg(2+)</name>
        <dbReference type="ChEBI" id="CHEBI:18420"/>
    </ligand>
</feature>
<feature type="binding site" evidence="1">
    <location>
        <position position="85"/>
    </location>
    <ligand>
        <name>ATP</name>
        <dbReference type="ChEBI" id="CHEBI:30616"/>
    </ligand>
</feature>
<feature type="binding site" evidence="1">
    <location>
        <begin position="146"/>
        <end position="148"/>
    </location>
    <ligand>
        <name>ATP</name>
        <dbReference type="ChEBI" id="CHEBI:30616"/>
    </ligand>
</feature>
<feature type="binding site" evidence="1">
    <location>
        <position position="189"/>
    </location>
    <ligand>
        <name>ATP</name>
        <dbReference type="ChEBI" id="CHEBI:30616"/>
    </ligand>
</feature>
<feature type="binding site" evidence="1">
    <location>
        <position position="199"/>
    </location>
    <ligand>
        <name>ATP</name>
        <dbReference type="ChEBI" id="CHEBI:30616"/>
    </ligand>
</feature>
<feature type="binding site" evidence="1">
    <location>
        <position position="236"/>
    </location>
    <ligand>
        <name>ATP</name>
        <dbReference type="ChEBI" id="CHEBI:30616"/>
    </ligand>
</feature>
<feature type="binding site" evidence="1">
    <location>
        <position position="328"/>
    </location>
    <ligand>
        <name>DNA</name>
        <dbReference type="ChEBI" id="CHEBI:16991"/>
    </ligand>
</feature>
<feature type="binding site" evidence="1">
    <location>
        <position position="333"/>
    </location>
    <ligand>
        <name>DNA</name>
        <dbReference type="ChEBI" id="CHEBI:16991"/>
    </ligand>
</feature>
<keyword id="KW-0067">ATP-binding</keyword>
<keyword id="KW-0963">Cytoplasm</keyword>
<keyword id="KW-0227">DNA damage</keyword>
<keyword id="KW-0233">DNA recombination</keyword>
<keyword id="KW-0234">DNA repair</keyword>
<keyword id="KW-0238">DNA-binding</keyword>
<keyword id="KW-0378">Hydrolase</keyword>
<keyword id="KW-0547">Nucleotide-binding</keyword>
<keyword id="KW-1185">Reference proteome</keyword>
<comment type="function">
    <text evidence="1">The RuvA-RuvB-RuvC complex processes Holliday junction (HJ) DNA during genetic recombination and DNA repair, while the RuvA-RuvB complex plays an important role in the rescue of blocked DNA replication forks via replication fork reversal (RFR). RuvA specifically binds to HJ cruciform DNA, conferring on it an open structure. The RuvB hexamer acts as an ATP-dependent pump, pulling dsDNA into and through the RuvAB complex. RuvB forms 2 homohexamers on either side of HJ DNA bound by 1 or 2 RuvA tetramers; 4 subunits per hexamer contact DNA at a time. Coordinated motions by a converter formed by DNA-disengaged RuvB subunits stimulates ATP hydrolysis and nucleotide exchange. Immobilization of the converter enables RuvB to convert the ATP-contained energy into a lever motion, pulling 2 nucleotides of DNA out of the RuvA tetramer per ATP hydrolyzed, thus driving DNA branch migration. The RuvB motors rotate together with the DNA substrate, which together with the progressing nucleotide cycle form the mechanistic basis for DNA recombination by continuous HJ branch migration. Branch migration allows RuvC to scan DNA until it finds its consensus sequence, where it cleaves and resolves cruciform DNA.</text>
</comment>
<comment type="catalytic activity">
    <reaction evidence="1">
        <text>ATP + H2O = ADP + phosphate + H(+)</text>
        <dbReference type="Rhea" id="RHEA:13065"/>
        <dbReference type="ChEBI" id="CHEBI:15377"/>
        <dbReference type="ChEBI" id="CHEBI:15378"/>
        <dbReference type="ChEBI" id="CHEBI:30616"/>
        <dbReference type="ChEBI" id="CHEBI:43474"/>
        <dbReference type="ChEBI" id="CHEBI:456216"/>
    </reaction>
</comment>
<comment type="subunit">
    <text evidence="1">Homohexamer. Forms an RuvA(8)-RuvB(12)-Holliday junction (HJ) complex. HJ DNA is sandwiched between 2 RuvA tetramers; dsDNA enters through RuvA and exits via RuvB. An RuvB hexamer assembles on each DNA strand where it exits the tetramer. Each RuvB hexamer is contacted by two RuvA subunits (via domain III) on 2 adjacent RuvB subunits; this complex drives branch migration. In the full resolvosome a probable DNA-RuvA(4)-RuvB(12)-RuvC(2) complex forms which resolves the HJ.</text>
</comment>
<comment type="subcellular location">
    <subcellularLocation>
        <location evidence="1">Cytoplasm</location>
    </subcellularLocation>
</comment>
<comment type="domain">
    <text evidence="1">Has 3 domains, the large (RuvB-L) and small ATPase (RuvB-S) domains and the C-terminal head (RuvB-H) domain. The head domain binds DNA, while the ATPase domains jointly bind ATP, ADP or are empty depending on the state of the subunit in the translocation cycle. During a single DNA translocation step the structure of each domain remains the same, but their relative positions change.</text>
</comment>
<comment type="similarity">
    <text evidence="1">Belongs to the RuvB family.</text>
</comment>
<organism>
    <name type="scientific">Leuconostoc mesenteroides subsp. mesenteroides (strain ATCC 8293 / DSM 20343 / BCRC 11652 / CCM 1803 / JCM 6124 / NCDO 523 / NBRC 100496 / NCIMB 8023 / NCTC 12954 / NRRL B-1118 / 37Y)</name>
    <dbReference type="NCBI Taxonomy" id="203120"/>
    <lineage>
        <taxon>Bacteria</taxon>
        <taxon>Bacillati</taxon>
        <taxon>Bacillota</taxon>
        <taxon>Bacilli</taxon>
        <taxon>Lactobacillales</taxon>
        <taxon>Lactobacillaceae</taxon>
        <taxon>Leuconostoc</taxon>
    </lineage>
</organism>
<evidence type="ECO:0000255" key="1">
    <source>
        <dbReference type="HAMAP-Rule" id="MF_00016"/>
    </source>
</evidence>
<sequence>MTEDNPQFNQWYEQDTEVDHLLRDAAANDEEQRSELSLRPQFLREYIGQEALKEELNVYISAAKQREEALDHVLLFGPPGLGKTTLAMIIANEMNVNIKTTSGPAIEKPGDLVALLNELEPGDILFIDEIHRIPTNIEEIMYSAMEDYFVDIMVGQGPTARPVHFPLPPFTLIGATTRPGMLSKPLRDRFGIINSLQYYTPEELQQIVVRTADIFNAPIKSEGAYEISLRSRGTPRIANRLLKRVRDFAQVEGKDAIDKNIVTIGLDKLRVDNRGLDETDHKLLETMIEYYKGGPVGLNTIAANIGEESETLEAMVEPYLLQIGFLQRTPRGRVVTEAGYTHLGHAYQRKL</sequence>
<accession>Q03YJ6</accession>
<dbReference type="EC" id="3.6.4.-" evidence="1"/>
<dbReference type="EMBL" id="CP000414">
    <property type="protein sequence ID" value="ABJ61726.1"/>
    <property type="molecule type" value="Genomic_DNA"/>
</dbReference>
<dbReference type="RefSeq" id="WP_011679427.1">
    <property type="nucleotide sequence ID" value="NC_008531.1"/>
</dbReference>
<dbReference type="SMR" id="Q03YJ6"/>
<dbReference type="EnsemblBacteria" id="ABJ61726">
    <property type="protein sequence ID" value="ABJ61726"/>
    <property type="gene ID" value="LEUM_0612"/>
</dbReference>
<dbReference type="GeneID" id="29577574"/>
<dbReference type="KEGG" id="lme:LEUM_0612"/>
<dbReference type="eggNOG" id="COG2255">
    <property type="taxonomic scope" value="Bacteria"/>
</dbReference>
<dbReference type="HOGENOM" id="CLU_055599_1_0_9"/>
<dbReference type="Proteomes" id="UP000000362">
    <property type="component" value="Chromosome"/>
</dbReference>
<dbReference type="GO" id="GO:0005737">
    <property type="term" value="C:cytoplasm"/>
    <property type="evidence" value="ECO:0007669"/>
    <property type="project" value="UniProtKB-SubCell"/>
</dbReference>
<dbReference type="GO" id="GO:0048476">
    <property type="term" value="C:Holliday junction resolvase complex"/>
    <property type="evidence" value="ECO:0007669"/>
    <property type="project" value="UniProtKB-UniRule"/>
</dbReference>
<dbReference type="GO" id="GO:0005524">
    <property type="term" value="F:ATP binding"/>
    <property type="evidence" value="ECO:0007669"/>
    <property type="project" value="UniProtKB-UniRule"/>
</dbReference>
<dbReference type="GO" id="GO:0016887">
    <property type="term" value="F:ATP hydrolysis activity"/>
    <property type="evidence" value="ECO:0007669"/>
    <property type="project" value="InterPro"/>
</dbReference>
<dbReference type="GO" id="GO:0000400">
    <property type="term" value="F:four-way junction DNA binding"/>
    <property type="evidence" value="ECO:0007669"/>
    <property type="project" value="UniProtKB-UniRule"/>
</dbReference>
<dbReference type="GO" id="GO:0009378">
    <property type="term" value="F:four-way junction helicase activity"/>
    <property type="evidence" value="ECO:0007669"/>
    <property type="project" value="InterPro"/>
</dbReference>
<dbReference type="GO" id="GO:0006310">
    <property type="term" value="P:DNA recombination"/>
    <property type="evidence" value="ECO:0007669"/>
    <property type="project" value="UniProtKB-UniRule"/>
</dbReference>
<dbReference type="GO" id="GO:0006281">
    <property type="term" value="P:DNA repair"/>
    <property type="evidence" value="ECO:0007669"/>
    <property type="project" value="UniProtKB-UniRule"/>
</dbReference>
<dbReference type="CDD" id="cd00009">
    <property type="entry name" value="AAA"/>
    <property type="match status" value="1"/>
</dbReference>
<dbReference type="Gene3D" id="1.10.8.60">
    <property type="match status" value="1"/>
</dbReference>
<dbReference type="Gene3D" id="3.40.50.300">
    <property type="entry name" value="P-loop containing nucleotide triphosphate hydrolases"/>
    <property type="match status" value="1"/>
</dbReference>
<dbReference type="Gene3D" id="1.10.10.10">
    <property type="entry name" value="Winged helix-like DNA-binding domain superfamily/Winged helix DNA-binding domain"/>
    <property type="match status" value="1"/>
</dbReference>
<dbReference type="HAMAP" id="MF_00016">
    <property type="entry name" value="DNA_HJ_migration_RuvB"/>
    <property type="match status" value="1"/>
</dbReference>
<dbReference type="InterPro" id="IPR003593">
    <property type="entry name" value="AAA+_ATPase"/>
</dbReference>
<dbReference type="InterPro" id="IPR041445">
    <property type="entry name" value="AAA_lid_4"/>
</dbReference>
<dbReference type="InterPro" id="IPR004605">
    <property type="entry name" value="DNA_helicase_Holl-junc_RuvB"/>
</dbReference>
<dbReference type="InterPro" id="IPR027417">
    <property type="entry name" value="P-loop_NTPase"/>
</dbReference>
<dbReference type="InterPro" id="IPR008824">
    <property type="entry name" value="RuvB-like_N"/>
</dbReference>
<dbReference type="InterPro" id="IPR008823">
    <property type="entry name" value="RuvB_C"/>
</dbReference>
<dbReference type="InterPro" id="IPR036388">
    <property type="entry name" value="WH-like_DNA-bd_sf"/>
</dbReference>
<dbReference type="InterPro" id="IPR036390">
    <property type="entry name" value="WH_DNA-bd_sf"/>
</dbReference>
<dbReference type="NCBIfam" id="NF000868">
    <property type="entry name" value="PRK00080.1"/>
    <property type="match status" value="1"/>
</dbReference>
<dbReference type="NCBIfam" id="TIGR00635">
    <property type="entry name" value="ruvB"/>
    <property type="match status" value="1"/>
</dbReference>
<dbReference type="PANTHER" id="PTHR42848">
    <property type="match status" value="1"/>
</dbReference>
<dbReference type="PANTHER" id="PTHR42848:SF1">
    <property type="entry name" value="HOLLIDAY JUNCTION BRANCH MIGRATION COMPLEX SUBUNIT RUVB"/>
    <property type="match status" value="1"/>
</dbReference>
<dbReference type="Pfam" id="PF17864">
    <property type="entry name" value="AAA_lid_4"/>
    <property type="match status" value="1"/>
</dbReference>
<dbReference type="Pfam" id="PF05491">
    <property type="entry name" value="RuvB_C"/>
    <property type="match status" value="1"/>
</dbReference>
<dbReference type="Pfam" id="PF05496">
    <property type="entry name" value="RuvB_N"/>
    <property type="match status" value="1"/>
</dbReference>
<dbReference type="SMART" id="SM00382">
    <property type="entry name" value="AAA"/>
    <property type="match status" value="1"/>
</dbReference>
<dbReference type="SUPFAM" id="SSF52540">
    <property type="entry name" value="P-loop containing nucleoside triphosphate hydrolases"/>
    <property type="match status" value="1"/>
</dbReference>
<dbReference type="SUPFAM" id="SSF46785">
    <property type="entry name" value="Winged helix' DNA-binding domain"/>
    <property type="match status" value="1"/>
</dbReference>
<gene>
    <name evidence="1" type="primary">ruvB</name>
    <name type="ordered locus">LEUM_0612</name>
</gene>
<proteinExistence type="inferred from homology"/>
<name>RUVB_LEUMM</name>
<reference key="1">
    <citation type="journal article" date="2006" name="Proc. Natl. Acad. Sci. U.S.A.">
        <title>Comparative genomics of the lactic acid bacteria.</title>
        <authorList>
            <person name="Makarova K.S."/>
            <person name="Slesarev A."/>
            <person name="Wolf Y.I."/>
            <person name="Sorokin A."/>
            <person name="Mirkin B."/>
            <person name="Koonin E.V."/>
            <person name="Pavlov A."/>
            <person name="Pavlova N."/>
            <person name="Karamychev V."/>
            <person name="Polouchine N."/>
            <person name="Shakhova V."/>
            <person name="Grigoriev I."/>
            <person name="Lou Y."/>
            <person name="Rohksar D."/>
            <person name="Lucas S."/>
            <person name="Huang K."/>
            <person name="Goodstein D.M."/>
            <person name="Hawkins T."/>
            <person name="Plengvidhya V."/>
            <person name="Welker D."/>
            <person name="Hughes J."/>
            <person name="Goh Y."/>
            <person name="Benson A."/>
            <person name="Baldwin K."/>
            <person name="Lee J.-H."/>
            <person name="Diaz-Muniz I."/>
            <person name="Dosti B."/>
            <person name="Smeianov V."/>
            <person name="Wechter W."/>
            <person name="Barabote R."/>
            <person name="Lorca G."/>
            <person name="Altermann E."/>
            <person name="Barrangou R."/>
            <person name="Ganesan B."/>
            <person name="Xie Y."/>
            <person name="Rawsthorne H."/>
            <person name="Tamir D."/>
            <person name="Parker C."/>
            <person name="Breidt F."/>
            <person name="Broadbent J.R."/>
            <person name="Hutkins R."/>
            <person name="O'Sullivan D."/>
            <person name="Steele J."/>
            <person name="Unlu G."/>
            <person name="Saier M.H. Jr."/>
            <person name="Klaenhammer T."/>
            <person name="Richardson P."/>
            <person name="Kozyavkin S."/>
            <person name="Weimer B.C."/>
            <person name="Mills D.A."/>
        </authorList>
    </citation>
    <scope>NUCLEOTIDE SEQUENCE [LARGE SCALE GENOMIC DNA]</scope>
    <source>
        <strain>ATCC 8293 / DSM 20343 / BCRC 11652 / CCM 1803 / JCM 6124 / NCDO 523 / NBRC 100496 / NCIMB 8023 / NCTC 12954 / NRRL B-1118 / 37Y</strain>
    </source>
</reference>
<protein>
    <recommendedName>
        <fullName evidence="1">Holliday junction branch migration complex subunit RuvB</fullName>
        <ecNumber evidence="1">3.6.4.-</ecNumber>
    </recommendedName>
</protein>